<evidence type="ECO:0000250" key="1"/>
<evidence type="ECO:0000250" key="2">
    <source>
        <dbReference type="UniProtKB" id="P0AFB8"/>
    </source>
</evidence>
<evidence type="ECO:0000255" key="3">
    <source>
        <dbReference type="PROSITE-ProRule" id="PRU00169"/>
    </source>
</evidence>
<evidence type="ECO:0000255" key="4">
    <source>
        <dbReference type="PROSITE-ProRule" id="PRU00193"/>
    </source>
</evidence>
<evidence type="ECO:0000305" key="5"/>
<evidence type="ECO:0007829" key="6">
    <source>
        <dbReference type="PDB" id="1DC7"/>
    </source>
</evidence>
<evidence type="ECO:0007829" key="7">
    <source>
        <dbReference type="PDB" id="1DC8"/>
    </source>
</evidence>
<evidence type="ECO:0007829" key="8">
    <source>
        <dbReference type="PDB" id="1J56"/>
    </source>
</evidence>
<evidence type="ECO:0007829" key="9">
    <source>
        <dbReference type="PDB" id="1KRW"/>
    </source>
</evidence>
<evidence type="ECO:0007829" key="10">
    <source>
        <dbReference type="PDB" id="1NTC"/>
    </source>
</evidence>
<proteinExistence type="evidence at protein level"/>
<name>NTRC_SALTY</name>
<reference key="1">
    <citation type="journal article" date="1995" name="J. Mol. Biol.">
        <title>Constitutive forms of the enhancer-binding protein NtrC: evidence that essential oligomerization determinants lie in the central activation domain.</title>
        <authorList>
            <person name="Flashner Y."/>
            <person name="Weiss D.S."/>
            <person name="Keener J."/>
            <person name="Kustu S.G."/>
        </authorList>
    </citation>
    <scope>NUCLEOTIDE SEQUENCE [GENOMIC DNA]</scope>
    <source>
        <strain>LT2</strain>
    </source>
</reference>
<reference key="2">
    <citation type="journal article" date="2001" name="Nature">
        <title>Complete genome sequence of Salmonella enterica serovar Typhimurium LT2.</title>
        <authorList>
            <person name="McClelland M."/>
            <person name="Sanderson K.E."/>
            <person name="Spieth J."/>
            <person name="Clifton S.W."/>
            <person name="Latreille P."/>
            <person name="Courtney L."/>
            <person name="Porwollik S."/>
            <person name="Ali J."/>
            <person name="Dante M."/>
            <person name="Du F."/>
            <person name="Hou S."/>
            <person name="Layman D."/>
            <person name="Leonard S."/>
            <person name="Nguyen C."/>
            <person name="Scott K."/>
            <person name="Holmes A."/>
            <person name="Grewal N."/>
            <person name="Mulvaney E."/>
            <person name="Ryan E."/>
            <person name="Sun H."/>
            <person name="Florea L."/>
            <person name="Miller W."/>
            <person name="Stoneking T."/>
            <person name="Nhan M."/>
            <person name="Waterston R."/>
            <person name="Wilson R.K."/>
        </authorList>
    </citation>
    <scope>NUCLEOTIDE SEQUENCE [LARGE SCALE GENOMIC DNA]</scope>
    <source>
        <strain>LT2 / SGSC1412 / ATCC 700720</strain>
    </source>
</reference>
<reference key="3">
    <citation type="journal article" date="1995" name="Biochemistry">
        <title>Three-dimensional solution structure of the N-terminal receiver domain of NTRC.</title>
        <authorList>
            <person name="Volkman B.F."/>
            <person name="Nohaile M.J."/>
            <person name="Amy N.K."/>
            <person name="Kustu S."/>
            <person name="Wemmer D.E."/>
        </authorList>
    </citation>
    <scope>STRUCTURE BY NMR OF 1-124</scope>
</reference>
<reference key="4">
    <citation type="journal article" date="1999" name="J. Mol. Biol.">
        <title>Solution structure of the DNA-binding domain of NtrC with three alanine substitutions.</title>
        <authorList>
            <person name="Pelton J.G."/>
            <person name="Kustu S."/>
            <person name="Wemmer D.E."/>
        </authorList>
    </citation>
    <scope>STRUCTURE BY NMR OF 379-469</scope>
</reference>
<reference key="5">
    <citation type="journal article" date="1999" name="Nature">
        <title>Structure of a transiently phosphorylated switch in bacterial signal transduction.</title>
        <authorList>
            <person name="Kern D."/>
            <person name="Volkman B.F."/>
            <person name="Luginbuhl P."/>
            <person name="Nohaile M.J."/>
            <person name="Kustu S."/>
            <person name="Wemmer D.E."/>
        </authorList>
    </citation>
    <scope>STRUCTURE BY NMR OF 1-124</scope>
</reference>
<protein>
    <recommendedName>
        <fullName evidence="2">DNA-binding transcriptional regulator NtrC</fullName>
    </recommendedName>
    <alternativeName>
        <fullName evidence="2">Nitrogen regulation protein NR(I)</fullName>
    </alternativeName>
    <alternativeName>
        <fullName evidence="2">Nitrogen regulator I</fullName>
        <shortName evidence="2">NRI</shortName>
    </alternativeName>
</protein>
<sequence>MQRGIVWVVDDDSSIRWVLERALAGAGLTCTTFENGNEVLAALASKTPDVLLSDIRMPGMDGLALLKQIKQRHPMLPVIIMTAHSDLDAAVSAYQQGAFDYLPKPFDIDEAVALVERAISHYQEQQQPRNIEVNGPTTDMIGEAPAMQDVFRIIGRLSRSSISVLINGESGTGKELVAHALHRHSPRAKAPFIALNMAAIPKDLIESELFGHEKGAFTGANTIRQGRFEQADGGTLFLDEIGDMPLDVQTRLLRVLADGQFYRVGGYAPVKVDVRIIAATHQNLERRVQEGKFREDLFHRLNVIRIHLPPLRERREDIPRLARHFLQVAARELGVEAKLLHPETETALTRLAWPGNVRQLENTCRWLTVMAAGQEVLIQDLPGELFEASTPDSPSHLPPDSWATLLAQWADRALRSGHQNLLSEAQPELERTLLTTALRHTQGHKQEAARLLGWGRNTLTRKLKELGME</sequence>
<dbReference type="EMBL" id="X85104">
    <property type="protein sequence ID" value="CAA59425.1"/>
    <property type="molecule type" value="Genomic_DNA"/>
</dbReference>
<dbReference type="EMBL" id="AE006468">
    <property type="protein sequence ID" value="AAL22844.1"/>
    <property type="molecule type" value="Genomic_DNA"/>
</dbReference>
<dbReference type="PIR" id="S53024">
    <property type="entry name" value="S53024"/>
</dbReference>
<dbReference type="RefSeq" id="NP_462885.1">
    <property type="nucleotide sequence ID" value="NC_003197.2"/>
</dbReference>
<dbReference type="RefSeq" id="WP_001188783.1">
    <property type="nucleotide sequence ID" value="NC_003197.2"/>
</dbReference>
<dbReference type="PDB" id="1DC7">
    <property type="method" value="NMR"/>
    <property type="chains" value="A=1-124"/>
</dbReference>
<dbReference type="PDB" id="1DC8">
    <property type="method" value="NMR"/>
    <property type="chains" value="A=1-124"/>
</dbReference>
<dbReference type="PDB" id="1J56">
    <property type="method" value="NMR"/>
    <property type="chains" value="A=1-124"/>
</dbReference>
<dbReference type="PDB" id="1KRW">
    <property type="method" value="NMR"/>
    <property type="chains" value="A=1-124"/>
</dbReference>
<dbReference type="PDB" id="1KRX">
    <property type="method" value="NMR"/>
    <property type="chains" value="A=1-124"/>
</dbReference>
<dbReference type="PDB" id="1NTC">
    <property type="method" value="NMR"/>
    <property type="chains" value="A/B=380-469"/>
</dbReference>
<dbReference type="PDB" id="1NTR">
    <property type="method" value="NMR"/>
    <property type="chains" value="A=1-124"/>
</dbReference>
<dbReference type="PDBsum" id="1DC7"/>
<dbReference type="PDBsum" id="1DC8"/>
<dbReference type="PDBsum" id="1J56"/>
<dbReference type="PDBsum" id="1KRW"/>
<dbReference type="PDBsum" id="1KRX"/>
<dbReference type="PDBsum" id="1NTC"/>
<dbReference type="PDBsum" id="1NTR"/>
<dbReference type="BMRB" id="P41789"/>
<dbReference type="SMR" id="P41789"/>
<dbReference type="STRING" id="99287.STM4005"/>
<dbReference type="DrugBank" id="DB01857">
    <property type="generic name" value="Phosphoaspartate"/>
</dbReference>
<dbReference type="PaxDb" id="99287-STM4005"/>
<dbReference type="GeneID" id="1255531"/>
<dbReference type="KEGG" id="stm:STM4005"/>
<dbReference type="PATRIC" id="fig|99287.12.peg.4221"/>
<dbReference type="HOGENOM" id="CLU_000445_0_6_6"/>
<dbReference type="OMA" id="LENICHW"/>
<dbReference type="PhylomeDB" id="P41789"/>
<dbReference type="BioCyc" id="SENT99287:STM4005-MONOMER"/>
<dbReference type="EvolutionaryTrace" id="P41789"/>
<dbReference type="Proteomes" id="UP000001014">
    <property type="component" value="Chromosome"/>
</dbReference>
<dbReference type="GO" id="GO:0005737">
    <property type="term" value="C:cytoplasm"/>
    <property type="evidence" value="ECO:0007669"/>
    <property type="project" value="UniProtKB-SubCell"/>
</dbReference>
<dbReference type="GO" id="GO:0032993">
    <property type="term" value="C:protein-DNA complex"/>
    <property type="evidence" value="ECO:0000318"/>
    <property type="project" value="GO_Central"/>
</dbReference>
<dbReference type="GO" id="GO:0005524">
    <property type="term" value="F:ATP binding"/>
    <property type="evidence" value="ECO:0007669"/>
    <property type="project" value="UniProtKB-KW"/>
</dbReference>
<dbReference type="GO" id="GO:0016887">
    <property type="term" value="F:ATP hydrolysis activity"/>
    <property type="evidence" value="ECO:0007669"/>
    <property type="project" value="InterPro"/>
</dbReference>
<dbReference type="GO" id="GO:0000987">
    <property type="term" value="F:cis-regulatory region sequence-specific DNA binding"/>
    <property type="evidence" value="ECO:0000318"/>
    <property type="project" value="GO_Central"/>
</dbReference>
<dbReference type="GO" id="GO:0001216">
    <property type="term" value="F:DNA-binding transcription activator activity"/>
    <property type="evidence" value="ECO:0000318"/>
    <property type="project" value="GO_Central"/>
</dbReference>
<dbReference type="GO" id="GO:0000156">
    <property type="term" value="F:phosphorelay response regulator activity"/>
    <property type="evidence" value="ECO:0007669"/>
    <property type="project" value="InterPro"/>
</dbReference>
<dbReference type="GO" id="GO:0009399">
    <property type="term" value="P:nitrogen fixation"/>
    <property type="evidence" value="ECO:0007669"/>
    <property type="project" value="UniProtKB-KW"/>
</dbReference>
<dbReference type="GO" id="GO:0045893">
    <property type="term" value="P:positive regulation of DNA-templated transcription"/>
    <property type="evidence" value="ECO:0000318"/>
    <property type="project" value="GO_Central"/>
</dbReference>
<dbReference type="GO" id="GO:0006808">
    <property type="term" value="P:regulation of nitrogen utilization"/>
    <property type="evidence" value="ECO:0007669"/>
    <property type="project" value="InterPro"/>
</dbReference>
<dbReference type="CDD" id="cd00009">
    <property type="entry name" value="AAA"/>
    <property type="match status" value="1"/>
</dbReference>
<dbReference type="CDD" id="cd19919">
    <property type="entry name" value="REC_NtrC"/>
    <property type="match status" value="1"/>
</dbReference>
<dbReference type="FunFam" id="1.10.10.60:FF:000088">
    <property type="entry name" value="DNA-binding transcriptional regulator NtrC"/>
    <property type="match status" value="1"/>
</dbReference>
<dbReference type="FunFam" id="1.10.8.60:FF:000014">
    <property type="entry name" value="DNA-binding transcriptional regulator NtrC"/>
    <property type="match status" value="1"/>
</dbReference>
<dbReference type="FunFam" id="3.40.50.2300:FF:000018">
    <property type="entry name" value="DNA-binding transcriptional regulator NtrC"/>
    <property type="match status" value="1"/>
</dbReference>
<dbReference type="FunFam" id="3.40.50.300:FF:000006">
    <property type="entry name" value="DNA-binding transcriptional regulator NtrC"/>
    <property type="match status" value="1"/>
</dbReference>
<dbReference type="Gene3D" id="1.10.8.60">
    <property type="match status" value="1"/>
</dbReference>
<dbReference type="Gene3D" id="3.40.50.2300">
    <property type="match status" value="1"/>
</dbReference>
<dbReference type="Gene3D" id="1.10.10.60">
    <property type="entry name" value="Homeodomain-like"/>
    <property type="match status" value="1"/>
</dbReference>
<dbReference type="Gene3D" id="3.40.50.300">
    <property type="entry name" value="P-loop containing nucleotide triphosphate hydrolases"/>
    <property type="match status" value="1"/>
</dbReference>
<dbReference type="InterPro" id="IPR003593">
    <property type="entry name" value="AAA+_ATPase"/>
</dbReference>
<dbReference type="InterPro" id="IPR011006">
    <property type="entry name" value="CheY-like_superfamily"/>
</dbReference>
<dbReference type="InterPro" id="IPR009057">
    <property type="entry name" value="Homeodomain-like_sf"/>
</dbReference>
<dbReference type="InterPro" id="IPR002197">
    <property type="entry name" value="HTH_Fis"/>
</dbReference>
<dbReference type="InterPro" id="IPR027417">
    <property type="entry name" value="P-loop_NTPase"/>
</dbReference>
<dbReference type="InterPro" id="IPR001789">
    <property type="entry name" value="Sig_transdc_resp-reg_receiver"/>
</dbReference>
<dbReference type="InterPro" id="IPR002078">
    <property type="entry name" value="Sigma_54_int"/>
</dbReference>
<dbReference type="InterPro" id="IPR025662">
    <property type="entry name" value="Sigma_54_int_dom_ATP-bd_1"/>
</dbReference>
<dbReference type="InterPro" id="IPR025943">
    <property type="entry name" value="Sigma_54_int_dom_ATP-bd_2"/>
</dbReference>
<dbReference type="InterPro" id="IPR025944">
    <property type="entry name" value="Sigma_54_int_dom_CS"/>
</dbReference>
<dbReference type="InterPro" id="IPR010114">
    <property type="entry name" value="Transcript_reg_NtrC"/>
</dbReference>
<dbReference type="NCBIfam" id="TIGR01818">
    <property type="entry name" value="ntrC"/>
    <property type="match status" value="1"/>
</dbReference>
<dbReference type="NCBIfam" id="NF008176">
    <property type="entry name" value="PRK10923.1"/>
    <property type="match status" value="1"/>
</dbReference>
<dbReference type="PANTHER" id="PTHR32071:SF95">
    <property type="entry name" value="DNA-BINDING TRANSCRIPTIONAL REGULATOR NTRC"/>
    <property type="match status" value="1"/>
</dbReference>
<dbReference type="PANTHER" id="PTHR32071">
    <property type="entry name" value="TRANSCRIPTIONAL REGULATORY PROTEIN"/>
    <property type="match status" value="1"/>
</dbReference>
<dbReference type="Pfam" id="PF02954">
    <property type="entry name" value="HTH_8"/>
    <property type="match status" value="1"/>
</dbReference>
<dbReference type="Pfam" id="PF00072">
    <property type="entry name" value="Response_reg"/>
    <property type="match status" value="1"/>
</dbReference>
<dbReference type="Pfam" id="PF00158">
    <property type="entry name" value="Sigma54_activat"/>
    <property type="match status" value="1"/>
</dbReference>
<dbReference type="PRINTS" id="PR01590">
    <property type="entry name" value="HTHFIS"/>
</dbReference>
<dbReference type="SMART" id="SM00382">
    <property type="entry name" value="AAA"/>
    <property type="match status" value="1"/>
</dbReference>
<dbReference type="SMART" id="SM00448">
    <property type="entry name" value="REC"/>
    <property type="match status" value="1"/>
</dbReference>
<dbReference type="SUPFAM" id="SSF52172">
    <property type="entry name" value="CheY-like"/>
    <property type="match status" value="1"/>
</dbReference>
<dbReference type="SUPFAM" id="SSF46689">
    <property type="entry name" value="Homeodomain-like"/>
    <property type="match status" value="1"/>
</dbReference>
<dbReference type="SUPFAM" id="SSF52540">
    <property type="entry name" value="P-loop containing nucleoside triphosphate hydrolases"/>
    <property type="match status" value="1"/>
</dbReference>
<dbReference type="PROSITE" id="PS50110">
    <property type="entry name" value="RESPONSE_REGULATORY"/>
    <property type="match status" value="1"/>
</dbReference>
<dbReference type="PROSITE" id="PS00675">
    <property type="entry name" value="SIGMA54_INTERACT_1"/>
    <property type="match status" value="1"/>
</dbReference>
<dbReference type="PROSITE" id="PS00676">
    <property type="entry name" value="SIGMA54_INTERACT_2"/>
    <property type="match status" value="1"/>
</dbReference>
<dbReference type="PROSITE" id="PS00688">
    <property type="entry name" value="SIGMA54_INTERACT_3"/>
    <property type="match status" value="1"/>
</dbReference>
<dbReference type="PROSITE" id="PS50045">
    <property type="entry name" value="SIGMA54_INTERACT_4"/>
    <property type="match status" value="1"/>
</dbReference>
<gene>
    <name type="primary">glnG</name>
    <name type="synonym">ntrC</name>
    <name type="ordered locus">STM4005</name>
</gene>
<accession>P41789</accession>
<organism>
    <name type="scientific">Salmonella typhimurium (strain LT2 / SGSC1412 / ATCC 700720)</name>
    <dbReference type="NCBI Taxonomy" id="99287"/>
    <lineage>
        <taxon>Bacteria</taxon>
        <taxon>Pseudomonadati</taxon>
        <taxon>Pseudomonadota</taxon>
        <taxon>Gammaproteobacteria</taxon>
        <taxon>Enterobacterales</taxon>
        <taxon>Enterobacteriaceae</taxon>
        <taxon>Salmonella</taxon>
    </lineage>
</organism>
<comment type="function">
    <text evidence="2">Member of the two-component regulatory system NtrB/NtrC, which controls expression of the nitrogen-regulated (ntr) genes in response to nitrogen limitation. Phosphorylated NtrC binds directly to DNA and stimulates the formation of open promoter-sigma54-RNA polymerase complexes.</text>
</comment>
<comment type="subcellular location">
    <subcellularLocation>
        <location evidence="2">Cytoplasm</location>
    </subcellularLocation>
</comment>
<comment type="PTM">
    <text evidence="2">Phosphorylated and dephosphorylated by NtrB.</text>
</comment>
<keyword id="KW-0002">3D-structure</keyword>
<keyword id="KW-0010">Activator</keyword>
<keyword id="KW-0067">ATP-binding</keyword>
<keyword id="KW-0963">Cytoplasm</keyword>
<keyword id="KW-0238">DNA-binding</keyword>
<keyword id="KW-0535">Nitrogen fixation</keyword>
<keyword id="KW-0547">Nucleotide-binding</keyword>
<keyword id="KW-0597">Phosphoprotein</keyword>
<keyword id="KW-1185">Reference proteome</keyword>
<keyword id="KW-0678">Repressor</keyword>
<keyword id="KW-0804">Transcription</keyword>
<keyword id="KW-0805">Transcription regulation</keyword>
<keyword id="KW-0902">Two-component regulatory system</keyword>
<feature type="chain" id="PRO_0000081167" description="DNA-binding transcriptional regulator NtrC">
    <location>
        <begin position="1"/>
        <end position="469"/>
    </location>
</feature>
<feature type="domain" description="Response regulatory" evidence="3">
    <location>
        <begin position="5"/>
        <end position="119"/>
    </location>
</feature>
<feature type="domain" description="Sigma-54 factor interaction" evidence="4">
    <location>
        <begin position="140"/>
        <end position="369"/>
    </location>
</feature>
<feature type="DNA-binding region" description="H-T-H motif" evidence="1">
    <location>
        <begin position="445"/>
        <end position="464"/>
    </location>
</feature>
<feature type="binding site" evidence="4">
    <location>
        <begin position="168"/>
        <end position="175"/>
    </location>
    <ligand>
        <name>ATP</name>
        <dbReference type="ChEBI" id="CHEBI:30616"/>
    </ligand>
</feature>
<feature type="binding site" evidence="4">
    <location>
        <begin position="231"/>
        <end position="240"/>
    </location>
    <ligand>
        <name>ATP</name>
        <dbReference type="ChEBI" id="CHEBI:30616"/>
    </ligand>
</feature>
<feature type="modified residue" description="4-aspartylphosphate" evidence="3">
    <location>
        <position position="54"/>
    </location>
</feature>
<feature type="sequence conflict" description="In Ref. 1; CAA59425." evidence="5" ref="1">
    <original>V</original>
    <variation>L</variation>
    <location>
        <position position="150"/>
    </location>
</feature>
<feature type="strand" evidence="6">
    <location>
        <begin position="7"/>
        <end position="9"/>
    </location>
</feature>
<feature type="strand" evidence="6">
    <location>
        <begin position="11"/>
        <end position="14"/>
    </location>
</feature>
<feature type="helix" evidence="6">
    <location>
        <begin position="15"/>
        <end position="23"/>
    </location>
</feature>
<feature type="turn" evidence="6">
    <location>
        <begin position="24"/>
        <end position="27"/>
    </location>
</feature>
<feature type="strand" evidence="7">
    <location>
        <begin position="33"/>
        <end position="36"/>
    </location>
</feature>
<feature type="helix" evidence="6">
    <location>
        <begin position="38"/>
        <end position="42"/>
    </location>
</feature>
<feature type="strand" evidence="6">
    <location>
        <begin position="43"/>
        <end position="45"/>
    </location>
</feature>
<feature type="strand" evidence="6">
    <location>
        <begin position="51"/>
        <end position="53"/>
    </location>
</feature>
<feature type="strand" evidence="8">
    <location>
        <begin position="56"/>
        <end position="58"/>
    </location>
</feature>
<feature type="turn" evidence="6">
    <location>
        <begin position="59"/>
        <end position="61"/>
    </location>
</feature>
<feature type="helix" evidence="6">
    <location>
        <begin position="66"/>
        <end position="72"/>
    </location>
</feature>
<feature type="strand" evidence="7">
    <location>
        <begin position="73"/>
        <end position="76"/>
    </location>
</feature>
<feature type="strand" evidence="8">
    <location>
        <begin position="78"/>
        <end position="81"/>
    </location>
</feature>
<feature type="turn" evidence="6">
    <location>
        <begin position="88"/>
        <end position="90"/>
    </location>
</feature>
<feature type="strand" evidence="6">
    <location>
        <begin position="91"/>
        <end position="93"/>
    </location>
</feature>
<feature type="strand" evidence="9">
    <location>
        <begin position="98"/>
        <end position="101"/>
    </location>
</feature>
<feature type="helix" evidence="6">
    <location>
        <begin position="108"/>
        <end position="121"/>
    </location>
</feature>
<feature type="strand" evidence="10">
    <location>
        <begin position="390"/>
        <end position="392"/>
    </location>
</feature>
<feature type="helix" evidence="10">
    <location>
        <begin position="402"/>
        <end position="414"/>
    </location>
</feature>
<feature type="turn" evidence="10">
    <location>
        <begin position="415"/>
        <end position="417"/>
    </location>
</feature>
<feature type="helix" evidence="10">
    <location>
        <begin position="421"/>
        <end position="440"/>
    </location>
</feature>
<feature type="turn" evidence="10">
    <location>
        <begin position="441"/>
        <end position="443"/>
    </location>
</feature>
<feature type="helix" evidence="10">
    <location>
        <begin position="447"/>
        <end position="451"/>
    </location>
</feature>
<feature type="helix" evidence="10">
    <location>
        <begin position="456"/>
        <end position="468"/>
    </location>
</feature>